<feature type="chain" id="PRO_0000161474" description="tRNA uridine(34) hydroxylase">
    <location>
        <begin position="1"/>
        <end position="272"/>
    </location>
</feature>
<feature type="domain" description="Rhodanese" evidence="1">
    <location>
        <begin position="121"/>
        <end position="217"/>
    </location>
</feature>
<feature type="active site" description="Cysteine persulfide intermediate" evidence="1">
    <location>
        <position position="177"/>
    </location>
</feature>
<accession>Q5HBX1</accession>
<accession>Q5FCZ9</accession>
<keyword id="KW-0560">Oxidoreductase</keyword>
<keyword id="KW-0819">tRNA processing</keyword>
<gene>
    <name evidence="1" type="primary">trhO</name>
    <name type="ordered locus">Erum2040</name>
    <name type="ordered locus">ERWE_CDS_02060</name>
</gene>
<organism>
    <name type="scientific">Ehrlichia ruminantium (strain Welgevonden)</name>
    <dbReference type="NCBI Taxonomy" id="254945"/>
    <lineage>
        <taxon>Bacteria</taxon>
        <taxon>Pseudomonadati</taxon>
        <taxon>Pseudomonadota</taxon>
        <taxon>Alphaproteobacteria</taxon>
        <taxon>Rickettsiales</taxon>
        <taxon>Anaplasmataceae</taxon>
        <taxon>Ehrlichia</taxon>
    </lineage>
</organism>
<reference key="1">
    <citation type="journal article" date="2005" name="Proc. Natl. Acad. Sci. U.S.A.">
        <title>The genome of the heartwater agent Ehrlichia ruminantium contains multiple tandem repeats of actively variable copy number.</title>
        <authorList>
            <person name="Collins N.E."/>
            <person name="Liebenberg J."/>
            <person name="de Villiers E.P."/>
            <person name="Brayton K.A."/>
            <person name="Louw E."/>
            <person name="Pretorius A."/>
            <person name="Faber F.E."/>
            <person name="van Heerden H."/>
            <person name="Josemans A."/>
            <person name="van Kleef M."/>
            <person name="Steyn H.C."/>
            <person name="van Strijp M.F."/>
            <person name="Zweygarth E."/>
            <person name="Jongejan F."/>
            <person name="Maillard J.C."/>
            <person name="Berthier D."/>
            <person name="Botha M."/>
            <person name="Joubert F."/>
            <person name="Corton C.H."/>
            <person name="Thomson N.R."/>
            <person name="Allsopp M.T."/>
            <person name="Allsopp B.A."/>
        </authorList>
    </citation>
    <scope>NUCLEOTIDE SEQUENCE [LARGE SCALE GENOMIC DNA]</scope>
    <source>
        <strain>Welgevonden</strain>
    </source>
</reference>
<reference key="2">
    <citation type="journal article" date="2006" name="J. Bacteriol.">
        <title>Comparative genomic analysis of three strains of Ehrlichia ruminantium reveals an active process of genome size plasticity.</title>
        <authorList>
            <person name="Frutos R."/>
            <person name="Viari A."/>
            <person name="Ferraz C."/>
            <person name="Morgat A."/>
            <person name="Eychenie S."/>
            <person name="Kandassamy Y."/>
            <person name="Chantal I."/>
            <person name="Bensaid A."/>
            <person name="Coissac E."/>
            <person name="Vachiery N."/>
            <person name="Demaille J."/>
            <person name="Martinez D."/>
        </authorList>
    </citation>
    <scope>NUCLEOTIDE SEQUENCE [LARGE SCALE GENOMIC DNA]</scope>
    <source>
        <strain>Welgevonden</strain>
    </source>
</reference>
<evidence type="ECO:0000255" key="1">
    <source>
        <dbReference type="HAMAP-Rule" id="MF_00469"/>
    </source>
</evidence>
<evidence type="ECO:0000305" key="2"/>
<dbReference type="EC" id="1.14.-.-" evidence="1"/>
<dbReference type="EMBL" id="CR767821">
    <property type="protein sequence ID" value="CAH57922.1"/>
    <property type="molecule type" value="Genomic_DNA"/>
</dbReference>
<dbReference type="EMBL" id="CR925678">
    <property type="protein sequence ID" value="CAI26700.1"/>
    <property type="status" value="ALT_FRAME"/>
    <property type="molecule type" value="Genomic_DNA"/>
</dbReference>
<dbReference type="RefSeq" id="WP_011154890.1">
    <property type="nucleotide sequence ID" value="NC_005295.2"/>
</dbReference>
<dbReference type="SMR" id="Q5HBX1"/>
<dbReference type="GeneID" id="33057700"/>
<dbReference type="KEGG" id="eru:Erum2040"/>
<dbReference type="KEGG" id="erw:ERWE_CDS_02060"/>
<dbReference type="eggNOG" id="COG1054">
    <property type="taxonomic scope" value="Bacteria"/>
</dbReference>
<dbReference type="HOGENOM" id="CLU_038878_0_1_5"/>
<dbReference type="Proteomes" id="UP000001021">
    <property type="component" value="Chromosome"/>
</dbReference>
<dbReference type="GO" id="GO:0016705">
    <property type="term" value="F:oxidoreductase activity, acting on paired donors, with incorporation or reduction of molecular oxygen"/>
    <property type="evidence" value="ECO:0007669"/>
    <property type="project" value="UniProtKB-UniRule"/>
</dbReference>
<dbReference type="GO" id="GO:0006400">
    <property type="term" value="P:tRNA modification"/>
    <property type="evidence" value="ECO:0007669"/>
    <property type="project" value="UniProtKB-UniRule"/>
</dbReference>
<dbReference type="Gene3D" id="3.30.70.100">
    <property type="match status" value="1"/>
</dbReference>
<dbReference type="Gene3D" id="3.40.250.10">
    <property type="entry name" value="Rhodanese-like domain"/>
    <property type="match status" value="1"/>
</dbReference>
<dbReference type="HAMAP" id="MF_00469">
    <property type="entry name" value="TrhO"/>
    <property type="match status" value="1"/>
</dbReference>
<dbReference type="InterPro" id="IPR001763">
    <property type="entry name" value="Rhodanese-like_dom"/>
</dbReference>
<dbReference type="InterPro" id="IPR036873">
    <property type="entry name" value="Rhodanese-like_dom_sf"/>
</dbReference>
<dbReference type="InterPro" id="IPR020936">
    <property type="entry name" value="TrhO"/>
</dbReference>
<dbReference type="InterPro" id="IPR040503">
    <property type="entry name" value="TRHO_N"/>
</dbReference>
<dbReference type="PANTHER" id="PTHR43268:SF3">
    <property type="entry name" value="RHODANESE-LIKE DOMAIN-CONTAINING PROTEIN 7-RELATED"/>
    <property type="match status" value="1"/>
</dbReference>
<dbReference type="PANTHER" id="PTHR43268">
    <property type="entry name" value="THIOSULFATE SULFURTRANSFERASE/RHODANESE-LIKE DOMAIN-CONTAINING PROTEIN 2"/>
    <property type="match status" value="1"/>
</dbReference>
<dbReference type="Pfam" id="PF00581">
    <property type="entry name" value="Rhodanese"/>
    <property type="match status" value="1"/>
</dbReference>
<dbReference type="Pfam" id="PF17773">
    <property type="entry name" value="UPF0176_N"/>
    <property type="match status" value="1"/>
</dbReference>
<dbReference type="SMART" id="SM00450">
    <property type="entry name" value="RHOD"/>
    <property type="match status" value="1"/>
</dbReference>
<dbReference type="SUPFAM" id="SSF52821">
    <property type="entry name" value="Rhodanese/Cell cycle control phosphatase"/>
    <property type="match status" value="1"/>
</dbReference>
<dbReference type="PROSITE" id="PS50206">
    <property type="entry name" value="RHODANESE_3"/>
    <property type="match status" value="1"/>
</dbReference>
<comment type="function">
    <text evidence="1">Catalyzes oxygen-dependent 5-hydroxyuridine (ho5U) modification at position 34 in tRNAs.</text>
</comment>
<comment type="catalytic activity">
    <reaction evidence="1">
        <text>uridine(34) in tRNA + AH2 + O2 = 5-hydroxyuridine(34) in tRNA + A + H2O</text>
        <dbReference type="Rhea" id="RHEA:64224"/>
        <dbReference type="Rhea" id="RHEA-COMP:11727"/>
        <dbReference type="Rhea" id="RHEA-COMP:13381"/>
        <dbReference type="ChEBI" id="CHEBI:13193"/>
        <dbReference type="ChEBI" id="CHEBI:15377"/>
        <dbReference type="ChEBI" id="CHEBI:15379"/>
        <dbReference type="ChEBI" id="CHEBI:17499"/>
        <dbReference type="ChEBI" id="CHEBI:65315"/>
        <dbReference type="ChEBI" id="CHEBI:136877"/>
    </reaction>
</comment>
<comment type="similarity">
    <text evidence="1">Belongs to the TrhO family.</text>
</comment>
<comment type="sequence caution" evidence="2">
    <conflict type="frameshift">
        <sequence resource="EMBL-CDS" id="CAI26700"/>
    </conflict>
</comment>
<proteinExistence type="inferred from homology"/>
<protein>
    <recommendedName>
        <fullName evidence="1">tRNA uridine(34) hydroxylase</fullName>
        <ecNumber evidence="1">1.14.-.-</ecNumber>
    </recommendedName>
    <alternativeName>
        <fullName evidence="1">tRNA hydroxylation protein O</fullName>
    </alternativeName>
</protein>
<name>TRHO_EHRRW</name>
<sequence>MGYVVSTFYRFVHLSNYYDIRPVLKEFCVQNNIKGTIILAEQGINATIAGSQNSLDKFFSFLDLDSRLCNLQYHKSFSRCNPFSKMKVKLRKELVCLGIEDFDDSVGGEYIDPENWDNFISRSDVYTIDTRNSYEINFGKFKNSINPETNCFRDFPDWAISWAKNKIDDDPIIAMYCTGGIRCEKSTAFMKDLGFSKVYHLKGGILEYFKSTGNINNLWEGYCFTFDDRIIVDDKLVPGDVKCILCGAHVMLEDMKSISRGHVLCFSCKDHV</sequence>